<organism>
    <name type="scientific">Brucella abortus biovar 1 (strain 9-941)</name>
    <dbReference type="NCBI Taxonomy" id="262698"/>
    <lineage>
        <taxon>Bacteria</taxon>
        <taxon>Pseudomonadati</taxon>
        <taxon>Pseudomonadota</taxon>
        <taxon>Alphaproteobacteria</taxon>
        <taxon>Hyphomicrobiales</taxon>
        <taxon>Brucellaceae</taxon>
        <taxon>Brucella/Ochrobactrum group</taxon>
        <taxon>Brucella</taxon>
    </lineage>
</organism>
<comment type="function">
    <text evidence="1">Transfers the gamma-phosphate of ATP to the 4'-position of a tetraacyldisaccharide 1-phosphate intermediate (termed DS-1-P) to form tetraacyldisaccharide 1,4'-bis-phosphate (lipid IVA).</text>
</comment>
<comment type="catalytic activity">
    <reaction evidence="1">
        <text>a lipid A disaccharide + ATP = a lipid IVA + ADP + H(+)</text>
        <dbReference type="Rhea" id="RHEA:67840"/>
        <dbReference type="ChEBI" id="CHEBI:15378"/>
        <dbReference type="ChEBI" id="CHEBI:30616"/>
        <dbReference type="ChEBI" id="CHEBI:176343"/>
        <dbReference type="ChEBI" id="CHEBI:176425"/>
        <dbReference type="ChEBI" id="CHEBI:456216"/>
        <dbReference type="EC" id="2.7.1.130"/>
    </reaction>
</comment>
<comment type="pathway">
    <text evidence="1">Glycolipid biosynthesis; lipid IV(A) biosynthesis; lipid IV(A) from (3R)-3-hydroxytetradecanoyl-[acyl-carrier-protein] and UDP-N-acetyl-alpha-D-glucosamine: step 6/6.</text>
</comment>
<comment type="similarity">
    <text evidence="1">Belongs to the LpxK family.</text>
</comment>
<proteinExistence type="inferred from homology"/>
<reference key="1">
    <citation type="journal article" date="2005" name="J. Bacteriol.">
        <title>Completion of the genome sequence of Brucella abortus and comparison to the highly similar genomes of Brucella melitensis and Brucella suis.</title>
        <authorList>
            <person name="Halling S.M."/>
            <person name="Peterson-Burch B.D."/>
            <person name="Bricker B.J."/>
            <person name="Zuerner R.L."/>
            <person name="Qing Z."/>
            <person name="Li L.-L."/>
            <person name="Kapur V."/>
            <person name="Alt D.P."/>
            <person name="Olsen S.C."/>
        </authorList>
    </citation>
    <scope>NUCLEOTIDE SEQUENCE [LARGE SCALE GENOMIC DNA]</scope>
    <source>
        <strain>9-941</strain>
    </source>
</reference>
<protein>
    <recommendedName>
        <fullName evidence="1">Tetraacyldisaccharide 4'-kinase</fullName>
        <ecNumber evidence="1">2.7.1.130</ecNumber>
    </recommendedName>
    <alternativeName>
        <fullName evidence="1">Lipid A 4'-kinase</fullName>
    </alternativeName>
</protein>
<feature type="chain" id="PRO_0000229945" description="Tetraacyldisaccharide 4'-kinase">
    <location>
        <begin position="1"/>
        <end position="341"/>
    </location>
</feature>
<feature type="binding site" evidence="1">
    <location>
        <begin position="54"/>
        <end position="61"/>
    </location>
    <ligand>
        <name>ATP</name>
        <dbReference type="ChEBI" id="CHEBI:30616"/>
    </ligand>
</feature>
<gene>
    <name evidence="1" type="primary">lpxK</name>
    <name type="ordered locus">BruAb2_0212</name>
</gene>
<keyword id="KW-0067">ATP-binding</keyword>
<keyword id="KW-0418">Kinase</keyword>
<keyword id="KW-0441">Lipid A biosynthesis</keyword>
<keyword id="KW-0444">Lipid biosynthesis</keyword>
<keyword id="KW-0443">Lipid metabolism</keyword>
<keyword id="KW-0547">Nucleotide-binding</keyword>
<keyword id="KW-0808">Transferase</keyword>
<dbReference type="EC" id="2.7.1.130" evidence="1"/>
<dbReference type="EMBL" id="AE017224">
    <property type="protein sequence ID" value="AAX75655.1"/>
    <property type="molecule type" value="Genomic_DNA"/>
</dbReference>
<dbReference type="RefSeq" id="WP_002966366.1">
    <property type="nucleotide sequence ID" value="NC_006933.1"/>
</dbReference>
<dbReference type="SMR" id="Q579M9"/>
<dbReference type="EnsemblBacteria" id="AAX75655">
    <property type="protein sequence ID" value="AAX75655"/>
    <property type="gene ID" value="BruAb2_0212"/>
</dbReference>
<dbReference type="GeneID" id="97535597"/>
<dbReference type="KEGG" id="bmb:BruAb2_0212"/>
<dbReference type="HOGENOM" id="CLU_038816_0_0_5"/>
<dbReference type="UniPathway" id="UPA00359">
    <property type="reaction ID" value="UER00482"/>
</dbReference>
<dbReference type="Proteomes" id="UP000000540">
    <property type="component" value="Chromosome II"/>
</dbReference>
<dbReference type="GO" id="GO:0005886">
    <property type="term" value="C:plasma membrane"/>
    <property type="evidence" value="ECO:0007669"/>
    <property type="project" value="TreeGrafter"/>
</dbReference>
<dbReference type="GO" id="GO:0005524">
    <property type="term" value="F:ATP binding"/>
    <property type="evidence" value="ECO:0007669"/>
    <property type="project" value="UniProtKB-UniRule"/>
</dbReference>
<dbReference type="GO" id="GO:0009029">
    <property type="term" value="F:tetraacyldisaccharide 4'-kinase activity"/>
    <property type="evidence" value="ECO:0007669"/>
    <property type="project" value="UniProtKB-UniRule"/>
</dbReference>
<dbReference type="GO" id="GO:0009245">
    <property type="term" value="P:lipid A biosynthetic process"/>
    <property type="evidence" value="ECO:0007669"/>
    <property type="project" value="UniProtKB-UniRule"/>
</dbReference>
<dbReference type="GO" id="GO:0009244">
    <property type="term" value="P:lipopolysaccharide core region biosynthetic process"/>
    <property type="evidence" value="ECO:0007669"/>
    <property type="project" value="TreeGrafter"/>
</dbReference>
<dbReference type="HAMAP" id="MF_00409">
    <property type="entry name" value="LpxK"/>
    <property type="match status" value="1"/>
</dbReference>
<dbReference type="InterPro" id="IPR003758">
    <property type="entry name" value="LpxK"/>
</dbReference>
<dbReference type="InterPro" id="IPR027417">
    <property type="entry name" value="P-loop_NTPase"/>
</dbReference>
<dbReference type="NCBIfam" id="TIGR00682">
    <property type="entry name" value="lpxK"/>
    <property type="match status" value="1"/>
</dbReference>
<dbReference type="PANTHER" id="PTHR42724">
    <property type="entry name" value="TETRAACYLDISACCHARIDE 4'-KINASE"/>
    <property type="match status" value="1"/>
</dbReference>
<dbReference type="PANTHER" id="PTHR42724:SF1">
    <property type="entry name" value="TETRAACYLDISACCHARIDE 4'-KINASE, MITOCHONDRIAL-RELATED"/>
    <property type="match status" value="1"/>
</dbReference>
<dbReference type="Pfam" id="PF02606">
    <property type="entry name" value="LpxK"/>
    <property type="match status" value="1"/>
</dbReference>
<dbReference type="SUPFAM" id="SSF52540">
    <property type="entry name" value="P-loop containing nucleoside triphosphate hydrolases"/>
    <property type="match status" value="1"/>
</dbReference>
<accession>Q579M9</accession>
<evidence type="ECO:0000255" key="1">
    <source>
        <dbReference type="HAMAP-Rule" id="MF_00409"/>
    </source>
</evidence>
<sequence length="341" mass="36782">MASEAPPFWWDEPDWRALALAPAAWIYGRVSGRRLIRAVPPRVSLPVLCVGNFTVGGAGKTPTAIAFARGAIARGMKPGIVSRGYGGNYSGLHLVDPGHDGARHVGDEPLLLARHAAVALSPDRVKAAEYLKSLGCDFIIMDDGFQSARLHADFSLLVVDASRGIGNGRVIPAGPLRAPLTDQMRKTDALLCIGKGNGADFVIRQAARAGRPIYHAQLRPSSSATVAGRRWLAFAGIGNPDKFYESVRQAGGEVVETHSFADHYSFEPDDIRGLVDMARRQGLGLITTAKDHVRLATMPGVPPEFLSKLAVLDVDLEFDRTDALDHILDTVVERFKSRLHG</sequence>
<name>LPXK_BRUAB</name>